<evidence type="ECO:0000255" key="1">
    <source>
        <dbReference type="HAMAP-Rule" id="MF_00151"/>
    </source>
</evidence>
<gene>
    <name evidence="1" type="primary">coaD</name>
    <name type="synonym">kdtB</name>
    <name type="ordered locus">LL2162</name>
    <name type="ORF">L21952</name>
</gene>
<comment type="function">
    <text evidence="1">Reversibly transfers an adenylyl group from ATP to 4'-phosphopantetheine, yielding dephospho-CoA (dPCoA) and pyrophosphate.</text>
</comment>
<comment type="catalytic activity">
    <reaction evidence="1">
        <text>(R)-4'-phosphopantetheine + ATP + H(+) = 3'-dephospho-CoA + diphosphate</text>
        <dbReference type="Rhea" id="RHEA:19801"/>
        <dbReference type="ChEBI" id="CHEBI:15378"/>
        <dbReference type="ChEBI" id="CHEBI:30616"/>
        <dbReference type="ChEBI" id="CHEBI:33019"/>
        <dbReference type="ChEBI" id="CHEBI:57328"/>
        <dbReference type="ChEBI" id="CHEBI:61723"/>
        <dbReference type="EC" id="2.7.7.3"/>
    </reaction>
</comment>
<comment type="cofactor">
    <cofactor evidence="1">
        <name>Mg(2+)</name>
        <dbReference type="ChEBI" id="CHEBI:18420"/>
    </cofactor>
</comment>
<comment type="pathway">
    <text evidence="1">Cofactor biosynthesis; coenzyme A biosynthesis; CoA from (R)-pantothenate: step 4/5.</text>
</comment>
<comment type="subunit">
    <text evidence="1">Homohexamer.</text>
</comment>
<comment type="subcellular location">
    <subcellularLocation>
        <location evidence="1">Cytoplasm</location>
    </subcellularLocation>
</comment>
<comment type="similarity">
    <text evidence="1">Belongs to the bacterial CoaD family.</text>
</comment>
<organism>
    <name type="scientific">Lactococcus lactis subsp. lactis (strain IL1403)</name>
    <name type="common">Streptococcus lactis</name>
    <dbReference type="NCBI Taxonomy" id="272623"/>
    <lineage>
        <taxon>Bacteria</taxon>
        <taxon>Bacillati</taxon>
        <taxon>Bacillota</taxon>
        <taxon>Bacilli</taxon>
        <taxon>Lactobacillales</taxon>
        <taxon>Streptococcaceae</taxon>
        <taxon>Lactococcus</taxon>
    </lineage>
</organism>
<keyword id="KW-0067">ATP-binding</keyword>
<keyword id="KW-0173">Coenzyme A biosynthesis</keyword>
<keyword id="KW-0963">Cytoplasm</keyword>
<keyword id="KW-0460">Magnesium</keyword>
<keyword id="KW-0547">Nucleotide-binding</keyword>
<keyword id="KW-0548">Nucleotidyltransferase</keyword>
<keyword id="KW-1185">Reference proteome</keyword>
<keyword id="KW-0808">Transferase</keyword>
<accession>Q9CDQ6</accession>
<reference key="1">
    <citation type="journal article" date="2001" name="Genome Res.">
        <title>The complete genome sequence of the lactic acid bacterium Lactococcus lactis ssp. lactis IL1403.</title>
        <authorList>
            <person name="Bolotin A."/>
            <person name="Wincker P."/>
            <person name="Mauger S."/>
            <person name="Jaillon O."/>
            <person name="Malarme K."/>
            <person name="Weissenbach J."/>
            <person name="Ehrlich S.D."/>
            <person name="Sorokin A."/>
        </authorList>
    </citation>
    <scope>NUCLEOTIDE SEQUENCE [LARGE SCALE GENOMIC DNA]</scope>
    <source>
        <strain>IL1403</strain>
    </source>
</reference>
<name>COAD_LACLA</name>
<feature type="chain" id="PRO_0000156222" description="Phosphopantetheine adenylyltransferase">
    <location>
        <begin position="1"/>
        <end position="165"/>
    </location>
</feature>
<feature type="binding site" evidence="1">
    <location>
        <begin position="11"/>
        <end position="12"/>
    </location>
    <ligand>
        <name>ATP</name>
        <dbReference type="ChEBI" id="CHEBI:30616"/>
    </ligand>
</feature>
<feature type="binding site" evidence="1">
    <location>
        <position position="11"/>
    </location>
    <ligand>
        <name>substrate</name>
    </ligand>
</feature>
<feature type="binding site" evidence="1">
    <location>
        <position position="19"/>
    </location>
    <ligand>
        <name>ATP</name>
        <dbReference type="ChEBI" id="CHEBI:30616"/>
    </ligand>
</feature>
<feature type="binding site" evidence="1">
    <location>
        <position position="43"/>
    </location>
    <ligand>
        <name>substrate</name>
    </ligand>
</feature>
<feature type="binding site" evidence="1">
    <location>
        <position position="79"/>
    </location>
    <ligand>
        <name>substrate</name>
    </ligand>
</feature>
<feature type="binding site" evidence="1">
    <location>
        <position position="93"/>
    </location>
    <ligand>
        <name>substrate</name>
    </ligand>
</feature>
<feature type="binding site" evidence="1">
    <location>
        <position position="104"/>
    </location>
    <ligand>
        <name>ATP</name>
        <dbReference type="ChEBI" id="CHEBI:30616"/>
    </ligand>
</feature>
<feature type="binding site" evidence="1">
    <location>
        <begin position="128"/>
        <end position="134"/>
    </location>
    <ligand>
        <name>ATP</name>
        <dbReference type="ChEBI" id="CHEBI:30616"/>
    </ligand>
</feature>
<feature type="site" description="Transition state stabilizer" evidence="1">
    <location>
        <position position="19"/>
    </location>
</feature>
<sequence length="165" mass="19128">MTEKIGLFTGTFDPLTNGHLDVIKRASQHFDQLYVGIFKNDQKNPLFPTDKRVEMLEEALTSLSVTHKVKVIKHERDLTVNIAKKLGVTALVRSLRNSQDLEYEKNMFYFNMEMTGIETIFFLAKPELEPLNSTRMRELHAFGQDVSAWVPENVSRELRKLDEKK</sequence>
<proteinExistence type="inferred from homology"/>
<dbReference type="EC" id="2.7.7.3" evidence="1"/>
<dbReference type="EMBL" id="AE005176">
    <property type="protein sequence ID" value="AAK06260.1"/>
    <property type="molecule type" value="Genomic_DNA"/>
</dbReference>
<dbReference type="PIR" id="B86895">
    <property type="entry name" value="B86895"/>
</dbReference>
<dbReference type="RefSeq" id="NP_268319.1">
    <property type="nucleotide sequence ID" value="NC_002662.1"/>
</dbReference>
<dbReference type="RefSeq" id="WP_010906348.1">
    <property type="nucleotide sequence ID" value="NC_002662.1"/>
</dbReference>
<dbReference type="SMR" id="Q9CDQ6"/>
<dbReference type="PaxDb" id="272623-L21952"/>
<dbReference type="EnsemblBacteria" id="AAK06260">
    <property type="protein sequence ID" value="AAK06260"/>
    <property type="gene ID" value="L21952"/>
</dbReference>
<dbReference type="GeneID" id="89634506"/>
<dbReference type="KEGG" id="lla:L21952"/>
<dbReference type="PATRIC" id="fig|272623.7.peg.2322"/>
<dbReference type="eggNOG" id="COG0669">
    <property type="taxonomic scope" value="Bacteria"/>
</dbReference>
<dbReference type="HOGENOM" id="CLU_100149_1_1_9"/>
<dbReference type="OrthoDB" id="9806661at2"/>
<dbReference type="UniPathway" id="UPA00241">
    <property type="reaction ID" value="UER00355"/>
</dbReference>
<dbReference type="Proteomes" id="UP000002196">
    <property type="component" value="Chromosome"/>
</dbReference>
<dbReference type="GO" id="GO:0005737">
    <property type="term" value="C:cytoplasm"/>
    <property type="evidence" value="ECO:0007669"/>
    <property type="project" value="UniProtKB-SubCell"/>
</dbReference>
<dbReference type="GO" id="GO:0005524">
    <property type="term" value="F:ATP binding"/>
    <property type="evidence" value="ECO:0007669"/>
    <property type="project" value="UniProtKB-KW"/>
</dbReference>
<dbReference type="GO" id="GO:0004595">
    <property type="term" value="F:pantetheine-phosphate adenylyltransferase activity"/>
    <property type="evidence" value="ECO:0007669"/>
    <property type="project" value="UniProtKB-UniRule"/>
</dbReference>
<dbReference type="GO" id="GO:0015937">
    <property type="term" value="P:coenzyme A biosynthetic process"/>
    <property type="evidence" value="ECO:0007669"/>
    <property type="project" value="UniProtKB-UniRule"/>
</dbReference>
<dbReference type="CDD" id="cd02163">
    <property type="entry name" value="PPAT"/>
    <property type="match status" value="1"/>
</dbReference>
<dbReference type="Gene3D" id="3.40.50.620">
    <property type="entry name" value="HUPs"/>
    <property type="match status" value="1"/>
</dbReference>
<dbReference type="HAMAP" id="MF_00151">
    <property type="entry name" value="PPAT_bact"/>
    <property type="match status" value="1"/>
</dbReference>
<dbReference type="InterPro" id="IPR004821">
    <property type="entry name" value="Cyt_trans-like"/>
</dbReference>
<dbReference type="InterPro" id="IPR001980">
    <property type="entry name" value="PPAT"/>
</dbReference>
<dbReference type="InterPro" id="IPR014729">
    <property type="entry name" value="Rossmann-like_a/b/a_fold"/>
</dbReference>
<dbReference type="NCBIfam" id="TIGR01510">
    <property type="entry name" value="coaD_prev_kdtB"/>
    <property type="match status" value="1"/>
</dbReference>
<dbReference type="NCBIfam" id="TIGR00125">
    <property type="entry name" value="cyt_tran_rel"/>
    <property type="match status" value="1"/>
</dbReference>
<dbReference type="PANTHER" id="PTHR21342">
    <property type="entry name" value="PHOSPHOPANTETHEINE ADENYLYLTRANSFERASE"/>
    <property type="match status" value="1"/>
</dbReference>
<dbReference type="PANTHER" id="PTHR21342:SF1">
    <property type="entry name" value="PHOSPHOPANTETHEINE ADENYLYLTRANSFERASE"/>
    <property type="match status" value="1"/>
</dbReference>
<dbReference type="Pfam" id="PF01467">
    <property type="entry name" value="CTP_transf_like"/>
    <property type="match status" value="1"/>
</dbReference>
<dbReference type="PRINTS" id="PR01020">
    <property type="entry name" value="LPSBIOSNTHSS"/>
</dbReference>
<dbReference type="SUPFAM" id="SSF52374">
    <property type="entry name" value="Nucleotidylyl transferase"/>
    <property type="match status" value="1"/>
</dbReference>
<protein>
    <recommendedName>
        <fullName evidence="1">Phosphopantetheine adenylyltransferase</fullName>
        <ecNumber evidence="1">2.7.7.3</ecNumber>
    </recommendedName>
    <alternativeName>
        <fullName evidence="1">Dephospho-CoA pyrophosphorylase</fullName>
    </alternativeName>
    <alternativeName>
        <fullName evidence="1">Pantetheine-phosphate adenylyltransferase</fullName>
        <shortName evidence="1">PPAT</shortName>
    </alternativeName>
</protein>